<comment type="function">
    <text evidence="1">Involved in the regulation of glutamine synthetase GlnA, a key enzyme in the process to assimilate ammonia. When cellular nitrogen levels are high, the C-terminal adenylyl transferase (AT) inactivates GlnA by covalent transfer of an adenylyl group from ATP to specific tyrosine residue of GlnA, thus reducing its activity. Conversely, when nitrogen levels are low, the N-terminal adenylyl removase (AR) activates GlnA by removing the adenylyl group by phosphorolysis, increasing its activity. The regulatory region of GlnE binds the signal transduction protein PII (GlnB) which indicates the nitrogen status of the cell.</text>
</comment>
<comment type="catalytic activity">
    <reaction evidence="1">
        <text>[glutamine synthetase]-O(4)-(5'-adenylyl)-L-tyrosine + phosphate = [glutamine synthetase]-L-tyrosine + ADP</text>
        <dbReference type="Rhea" id="RHEA:43716"/>
        <dbReference type="Rhea" id="RHEA-COMP:10660"/>
        <dbReference type="Rhea" id="RHEA-COMP:10661"/>
        <dbReference type="ChEBI" id="CHEBI:43474"/>
        <dbReference type="ChEBI" id="CHEBI:46858"/>
        <dbReference type="ChEBI" id="CHEBI:83624"/>
        <dbReference type="ChEBI" id="CHEBI:456216"/>
        <dbReference type="EC" id="2.7.7.89"/>
    </reaction>
</comment>
<comment type="catalytic activity">
    <reaction evidence="1">
        <text>[glutamine synthetase]-L-tyrosine + ATP = [glutamine synthetase]-O(4)-(5'-adenylyl)-L-tyrosine + diphosphate</text>
        <dbReference type="Rhea" id="RHEA:18589"/>
        <dbReference type="Rhea" id="RHEA-COMP:10660"/>
        <dbReference type="Rhea" id="RHEA-COMP:10661"/>
        <dbReference type="ChEBI" id="CHEBI:30616"/>
        <dbReference type="ChEBI" id="CHEBI:33019"/>
        <dbReference type="ChEBI" id="CHEBI:46858"/>
        <dbReference type="ChEBI" id="CHEBI:83624"/>
        <dbReference type="EC" id="2.7.7.42"/>
    </reaction>
</comment>
<comment type="cofactor">
    <cofactor evidence="1">
        <name>Mg(2+)</name>
        <dbReference type="ChEBI" id="CHEBI:18420"/>
    </cofactor>
</comment>
<comment type="similarity">
    <text evidence="1">Belongs to the GlnE family.</text>
</comment>
<dbReference type="EC" id="2.7.7.89" evidence="1"/>
<dbReference type="EC" id="2.7.7.42" evidence="1"/>
<dbReference type="EMBL" id="CP000155">
    <property type="protein sequence ID" value="ABC27926.1"/>
    <property type="molecule type" value="Genomic_DNA"/>
</dbReference>
<dbReference type="RefSeq" id="WP_011395001.1">
    <property type="nucleotide sequence ID" value="NC_007645.1"/>
</dbReference>
<dbReference type="SMR" id="Q2SN48"/>
<dbReference type="STRING" id="349521.HCH_01044"/>
<dbReference type="KEGG" id="hch:HCH_01044"/>
<dbReference type="eggNOG" id="COG1391">
    <property type="taxonomic scope" value="Bacteria"/>
</dbReference>
<dbReference type="HOGENOM" id="CLU_006233_0_1_6"/>
<dbReference type="OrthoDB" id="9759366at2"/>
<dbReference type="Proteomes" id="UP000000238">
    <property type="component" value="Chromosome"/>
</dbReference>
<dbReference type="GO" id="GO:0005829">
    <property type="term" value="C:cytosol"/>
    <property type="evidence" value="ECO:0007669"/>
    <property type="project" value="TreeGrafter"/>
</dbReference>
<dbReference type="GO" id="GO:0008882">
    <property type="term" value="F:[glutamate-ammonia-ligase] adenylyltransferase activity"/>
    <property type="evidence" value="ECO:0007669"/>
    <property type="project" value="UniProtKB-UniRule"/>
</dbReference>
<dbReference type="GO" id="GO:0047388">
    <property type="term" value="F:[glutamine synthetase]-adenylyl-L-tyrosine phosphorylase activity"/>
    <property type="evidence" value="ECO:0007669"/>
    <property type="project" value="UniProtKB-EC"/>
</dbReference>
<dbReference type="GO" id="GO:0005524">
    <property type="term" value="F:ATP binding"/>
    <property type="evidence" value="ECO:0007669"/>
    <property type="project" value="UniProtKB-UniRule"/>
</dbReference>
<dbReference type="GO" id="GO:0000287">
    <property type="term" value="F:magnesium ion binding"/>
    <property type="evidence" value="ECO:0007669"/>
    <property type="project" value="UniProtKB-UniRule"/>
</dbReference>
<dbReference type="GO" id="GO:0000820">
    <property type="term" value="P:regulation of glutamine family amino acid metabolic process"/>
    <property type="evidence" value="ECO:0007669"/>
    <property type="project" value="UniProtKB-UniRule"/>
</dbReference>
<dbReference type="CDD" id="cd05401">
    <property type="entry name" value="NT_GlnE_GlnD_like"/>
    <property type="match status" value="2"/>
</dbReference>
<dbReference type="FunFam" id="1.20.120.330:FF:000005">
    <property type="entry name" value="Bifunctional glutamine synthetase adenylyltransferase/adenylyl-removing enzyme"/>
    <property type="match status" value="1"/>
</dbReference>
<dbReference type="FunFam" id="3.30.460.10:FF:000009">
    <property type="entry name" value="Bifunctional glutamine synthetase adenylyltransferase/adenylyl-removing enzyme"/>
    <property type="match status" value="2"/>
</dbReference>
<dbReference type="Gene3D" id="1.20.120.1510">
    <property type="match status" value="1"/>
</dbReference>
<dbReference type="Gene3D" id="3.30.460.10">
    <property type="entry name" value="Beta Polymerase, domain 2"/>
    <property type="match status" value="2"/>
</dbReference>
<dbReference type="Gene3D" id="1.10.4050.10">
    <property type="entry name" value="Glutamine synthase adenylyltransferase GlnE"/>
    <property type="match status" value="1"/>
</dbReference>
<dbReference type="Gene3D" id="1.20.120.330">
    <property type="entry name" value="Nucleotidyltransferases domain 2"/>
    <property type="match status" value="2"/>
</dbReference>
<dbReference type="HAMAP" id="MF_00802">
    <property type="entry name" value="GlnE"/>
    <property type="match status" value="1"/>
</dbReference>
<dbReference type="InterPro" id="IPR023057">
    <property type="entry name" value="GlnE"/>
</dbReference>
<dbReference type="InterPro" id="IPR005190">
    <property type="entry name" value="GlnE_rpt_dom"/>
</dbReference>
<dbReference type="InterPro" id="IPR043519">
    <property type="entry name" value="NT_sf"/>
</dbReference>
<dbReference type="InterPro" id="IPR013546">
    <property type="entry name" value="PII_UdlTrfase/GS_AdlTrfase"/>
</dbReference>
<dbReference type="NCBIfam" id="NF008292">
    <property type="entry name" value="PRK11072.1"/>
    <property type="match status" value="1"/>
</dbReference>
<dbReference type="PANTHER" id="PTHR30621:SF0">
    <property type="entry name" value="BIFUNCTIONAL GLUTAMINE SYNTHETASE ADENYLYLTRANSFERASE_ADENYLYL-REMOVING ENZYME"/>
    <property type="match status" value="1"/>
</dbReference>
<dbReference type="PANTHER" id="PTHR30621">
    <property type="entry name" value="GLUTAMINE SYNTHETASE ADENYLYLTRANSFERASE"/>
    <property type="match status" value="1"/>
</dbReference>
<dbReference type="Pfam" id="PF08335">
    <property type="entry name" value="GlnD_UR_UTase"/>
    <property type="match status" value="2"/>
</dbReference>
<dbReference type="Pfam" id="PF03710">
    <property type="entry name" value="GlnE"/>
    <property type="match status" value="2"/>
</dbReference>
<dbReference type="SUPFAM" id="SSF81301">
    <property type="entry name" value="Nucleotidyltransferase"/>
    <property type="match status" value="2"/>
</dbReference>
<dbReference type="SUPFAM" id="SSF81593">
    <property type="entry name" value="Nucleotidyltransferase substrate binding subunit/domain"/>
    <property type="match status" value="2"/>
</dbReference>
<name>GLNE_HAHCH</name>
<reference key="1">
    <citation type="journal article" date="2005" name="Nucleic Acids Res.">
        <title>Genomic blueprint of Hahella chejuensis, a marine microbe producing an algicidal agent.</title>
        <authorList>
            <person name="Jeong H."/>
            <person name="Yim J.H."/>
            <person name="Lee C."/>
            <person name="Choi S.-H."/>
            <person name="Park Y.K."/>
            <person name="Yoon S.H."/>
            <person name="Hur C.-G."/>
            <person name="Kang H.-Y."/>
            <person name="Kim D."/>
            <person name="Lee H.H."/>
            <person name="Park K.H."/>
            <person name="Park S.-H."/>
            <person name="Park H.-S."/>
            <person name="Lee H.K."/>
            <person name="Oh T.K."/>
            <person name="Kim J.F."/>
        </authorList>
    </citation>
    <scope>NUCLEOTIDE SEQUENCE [LARGE SCALE GENOMIC DNA]</scope>
    <source>
        <strain>KCTC 2396</strain>
    </source>
</reference>
<evidence type="ECO:0000255" key="1">
    <source>
        <dbReference type="HAMAP-Rule" id="MF_00802"/>
    </source>
</evidence>
<sequence length="963" mass="109664">MAAPSELQLYPSVIHPAIQKYWDEFCELPAETLSAFSSYYPDILRAFAVSDFLALNILREPELVLSFLQSSQHQKECQLVDFRAPLAEELSGALKEDDLLRILRLFRRRMMFRIIWRDLVCLVDYQVTTREVSWLAETCIDEALSWIYRDMSQQFGEPHSTAGVKQQLVVLAMGKLGANELNVSSDIDLIFTFPERGETQGGNRSLDNQAFFTRLGQRLIQALDNTTADGFVFRVDMRLRPYGQSGALALSFAAMEAYYQEQGRDWERYAMIKARAVAGDIDAGEELLTSLKPFVYRKYIDFGAVQALRAMKEMIEREVQRKGQDGNIKVGRGGIREIEFIVQVFQLMRGGRDVRLQQRNLLSTLECLEDEGLLPVAAAAELREAYIFLRNLEHAIQGLEDKQTQEIPKDEEGRERVAVAMGFPGWGACRVQLDKYRDCVSEHFADIIAERREAPLERPDTIEWKALWAGRLAQDEAQDLLLRSGCDQAQEIYEAVTQLRQSSRVQHMQLQGKERLDEFMPNLLQSLAQSRASHETCRRLLALVEAVLRRSAYLALLNENPGALTELIRLFAESAWIARQIVTTPLLLDELLHSGSLYTPPDTTALRDELRQQMLRIPNDDLEEQMEALRYFKKAHVLRVAASDLRETLPLMKVSDYLTFIAETIIEQVVDEAWETMVKKYGEPGYEDAALNDMRFAVIGYGKLGGIEMSYGSDLDLVFLHGASGDLSTSGETSIANQVFFTRLGQRIIHLLTTKTASGDIYEVDMRLRPSGNSGLLVSSVSAFQQYQEKSAWTWEHQALVRSRAVAGCPGIRAEFEKVRKDILTQHRDPAKLRTEVMDMREKMHASLGTKPDSSGSPPYFDLKHDRGGIVDIEFMVQYAALRWANEYPQIVVWSDNIRILEALGDAGVFSQEDADKLCDIYRLLRAHGHRLALQNLPARIQTDELLEERRWVVAFWEKVFAE</sequence>
<gene>
    <name evidence="1" type="primary">glnE</name>
    <name type="ordered locus">HCH_01044</name>
</gene>
<keyword id="KW-0067">ATP-binding</keyword>
<keyword id="KW-0460">Magnesium</keyword>
<keyword id="KW-0511">Multifunctional enzyme</keyword>
<keyword id="KW-0547">Nucleotide-binding</keyword>
<keyword id="KW-0548">Nucleotidyltransferase</keyword>
<keyword id="KW-1185">Reference proteome</keyword>
<keyword id="KW-0808">Transferase</keyword>
<accession>Q2SN48</accession>
<feature type="chain" id="PRO_1000133906" description="Bifunctional glutamine synthetase adenylyltransferase/adenylyl-removing enzyme">
    <location>
        <begin position="1"/>
        <end position="963"/>
    </location>
</feature>
<feature type="region of interest" description="Adenylyl removase" evidence="1">
    <location>
        <begin position="1"/>
        <end position="451"/>
    </location>
</feature>
<feature type="region of interest" description="Adenylyl transferase" evidence="1">
    <location>
        <begin position="461"/>
        <end position="963"/>
    </location>
</feature>
<protein>
    <recommendedName>
        <fullName evidence="1">Bifunctional glutamine synthetase adenylyltransferase/adenylyl-removing enzyme</fullName>
    </recommendedName>
    <alternativeName>
        <fullName evidence="1">ATP:glutamine synthetase adenylyltransferase</fullName>
    </alternativeName>
    <alternativeName>
        <fullName evidence="1">ATase</fullName>
    </alternativeName>
    <domain>
        <recommendedName>
            <fullName evidence="1">Glutamine synthetase adenylyl-L-tyrosine phosphorylase</fullName>
            <ecNumber evidence="1">2.7.7.89</ecNumber>
        </recommendedName>
        <alternativeName>
            <fullName evidence="1">Adenylyl removase</fullName>
            <shortName evidence="1">AR</shortName>
            <shortName evidence="1">AT-N</shortName>
        </alternativeName>
    </domain>
    <domain>
        <recommendedName>
            <fullName evidence="1">Glutamine synthetase adenylyl transferase</fullName>
            <ecNumber evidence="1">2.7.7.42</ecNumber>
        </recommendedName>
        <alternativeName>
            <fullName evidence="1">Adenylyl transferase</fullName>
            <shortName evidence="1">AT</shortName>
            <shortName evidence="1">AT-C</shortName>
        </alternativeName>
    </domain>
</protein>
<proteinExistence type="inferred from homology"/>
<organism>
    <name type="scientific">Hahella chejuensis (strain KCTC 2396)</name>
    <dbReference type="NCBI Taxonomy" id="349521"/>
    <lineage>
        <taxon>Bacteria</taxon>
        <taxon>Pseudomonadati</taxon>
        <taxon>Pseudomonadota</taxon>
        <taxon>Gammaproteobacteria</taxon>
        <taxon>Oceanospirillales</taxon>
        <taxon>Hahellaceae</taxon>
        <taxon>Hahella</taxon>
    </lineage>
</organism>